<evidence type="ECO:0000255" key="1">
    <source>
        <dbReference type="PROSITE-ProRule" id="PRU00532"/>
    </source>
</evidence>
<accession>Q05071</accession>
<feature type="chain" id="PRO_0000066315" description="Uncharacterized N-acetyltransferase in mutA 5'region">
    <location>
        <begin position="1"/>
        <end position="237"/>
    </location>
</feature>
<feature type="domain" description="N-acetyltransferase" evidence="1">
    <location>
        <begin position="119"/>
        <end position="237"/>
    </location>
</feature>
<reference key="1">
    <citation type="journal article" date="1993" name="J. Bacteriol.">
        <title>Cloning, sequencing, and expression of the gene encoding methylmalonyl-coenzyme A mutase from Streptomyces cinnamonensis.</title>
        <authorList>
            <person name="Birch A."/>
            <person name="Leiser A."/>
            <person name="Robinson J.A."/>
        </authorList>
    </citation>
    <scope>NUCLEOTIDE SEQUENCE [GENOMIC DNA]</scope>
    <source>
        <strain>A3823.5</strain>
    </source>
</reference>
<name>YMU5_STRVG</name>
<protein>
    <recommendedName>
        <fullName>Uncharacterized N-acetyltransferase in mutA 5'region</fullName>
        <ecNumber>2.3.1.-</ecNumber>
    </recommendedName>
    <alternativeName>
        <fullName>ORF-D</fullName>
    </alternativeName>
</protein>
<dbReference type="EC" id="2.3.1.-"/>
<dbReference type="EMBL" id="L10064">
    <property type="protein sequence ID" value="AAA03039.1"/>
    <property type="molecule type" value="Unassigned_DNA"/>
</dbReference>
<dbReference type="PIR" id="D40595">
    <property type="entry name" value="D40595"/>
</dbReference>
<dbReference type="SMR" id="Q05071"/>
<dbReference type="GO" id="GO:0016747">
    <property type="term" value="F:acyltransferase activity, transferring groups other than amino-acyl groups"/>
    <property type="evidence" value="ECO:0007669"/>
    <property type="project" value="InterPro"/>
</dbReference>
<dbReference type="Gene3D" id="3.40.630.30">
    <property type="match status" value="1"/>
</dbReference>
<dbReference type="InterPro" id="IPR016181">
    <property type="entry name" value="Acyl_CoA_acyltransferase"/>
</dbReference>
<dbReference type="InterPro" id="IPR000182">
    <property type="entry name" value="GNAT_dom"/>
</dbReference>
<dbReference type="SUPFAM" id="SSF55729">
    <property type="entry name" value="Acyl-CoA N-acyltransferases (Nat)"/>
    <property type="match status" value="1"/>
</dbReference>
<dbReference type="PROSITE" id="PS51186">
    <property type="entry name" value="GNAT"/>
    <property type="match status" value="1"/>
</dbReference>
<proteinExistence type="predicted"/>
<organism>
    <name type="scientific">Streptomyces virginiae</name>
    <name type="common">Streptomyces cinnamonensis</name>
    <dbReference type="NCBI Taxonomy" id="1961"/>
    <lineage>
        <taxon>Bacteria</taxon>
        <taxon>Bacillati</taxon>
        <taxon>Actinomycetota</taxon>
        <taxon>Actinomycetes</taxon>
        <taxon>Kitasatosporales</taxon>
        <taxon>Streptomycetaceae</taxon>
        <taxon>Streptomyces</taxon>
    </lineage>
</organism>
<keyword id="KW-0012">Acyltransferase</keyword>
<keyword id="KW-0808">Transferase</keyword>
<sequence length="237" mass="25025">MIQLPPHHLPAEPRWFAPGAPGPAALPEHVTATGVGSWWADRALDPRAVAVSCAGHVLLSGDPGSVAPGLLAPFAHSHVEAPVRFLPVLGSAFDRVVPDERMVYIHREPVEPPRPPRGVTVRRLTPTDAPALAALSADSSWIYDSWGGPEGLAASEHGWAAVDRDGRVAAVACGYFTGQAYEDVAVLTTPERRRERLALACVTALCADITARAHGELVLRTREPPEPPAGLDGGLPA</sequence>